<name>RNM_ECOLI</name>
<keyword id="KW-0002">3D-structure</keyword>
<keyword id="KW-0269">Exonuclease</keyword>
<keyword id="KW-0378">Hydrolase</keyword>
<keyword id="KW-0464">Manganese</keyword>
<keyword id="KW-0479">Metal-binding</keyword>
<keyword id="KW-0540">Nuclease</keyword>
<keyword id="KW-0547">Nucleotide-binding</keyword>
<keyword id="KW-1185">Reference proteome</keyword>
<keyword id="KW-0698">rRNA processing</keyword>
<sequence length="293" mass="32580">MSDTNYAVIYDLHSHTTASDGCLTPEALVHRAVEMRVGTLAITDHDTTAAIAPAREEISRSGLALNLIPGVEISTVWENHEIHIVGLNIDITHPLMCEFLAQQTERRNQRAQLIAERLEKAQIPGALEGAQRLAQGGAVTRGHFARFLVECGKASSMADVFKKYLARGKTGYVPPQWCTIEQAIDVIHHSGGKAVLAHPGRYNLSAKWLKRLVAHFAEHHGDAMEVAQCQQSPNERTQLAALARQHHLWASQGSDFHQPCPWIELGRKLWLPAGVEGVWQLWEQPQNTTEREL</sequence>
<accession>P77766</accession>
<dbReference type="EC" id="3.1.13.-" evidence="3 4"/>
<dbReference type="EC" id="3.1.3.97" evidence="3"/>
<dbReference type="EMBL" id="U00096">
    <property type="protein sequence ID" value="AAC74348.1"/>
    <property type="molecule type" value="Genomic_DNA"/>
</dbReference>
<dbReference type="EMBL" id="AP009048">
    <property type="protein sequence ID" value="BAA14800.1"/>
    <property type="molecule type" value="Genomic_DNA"/>
</dbReference>
<dbReference type="PIR" id="E64874">
    <property type="entry name" value="E64874"/>
</dbReference>
<dbReference type="RefSeq" id="NP_415782.1">
    <property type="nucleotide sequence ID" value="NC_000913.3"/>
</dbReference>
<dbReference type="RefSeq" id="WP_001285661.1">
    <property type="nucleotide sequence ID" value="NZ_STEB01000005.1"/>
</dbReference>
<dbReference type="PDB" id="7UG9">
    <property type="method" value="X-ray"/>
    <property type="resolution" value="1.69 A"/>
    <property type="chains" value="A=1-293"/>
</dbReference>
<dbReference type="PDBsum" id="7UG9"/>
<dbReference type="SMR" id="P77766"/>
<dbReference type="BioGRID" id="4260125">
    <property type="interactions" value="51"/>
</dbReference>
<dbReference type="BioGRID" id="850224">
    <property type="interactions" value="1"/>
</dbReference>
<dbReference type="FunCoup" id="P77766">
    <property type="interactions" value="285"/>
</dbReference>
<dbReference type="IntAct" id="P77766">
    <property type="interactions" value="9"/>
</dbReference>
<dbReference type="STRING" id="511145.b1266"/>
<dbReference type="PaxDb" id="511145-b1266"/>
<dbReference type="EnsemblBacteria" id="AAC74348">
    <property type="protein sequence ID" value="AAC74348"/>
    <property type="gene ID" value="b1266"/>
</dbReference>
<dbReference type="GeneID" id="945857"/>
<dbReference type="KEGG" id="ecj:JW1258"/>
<dbReference type="KEGG" id="eco:b1266"/>
<dbReference type="KEGG" id="ecoc:C3026_07420"/>
<dbReference type="PATRIC" id="fig|511145.12.peg.1315"/>
<dbReference type="EchoBASE" id="EB4005"/>
<dbReference type="eggNOG" id="COG0613">
    <property type="taxonomic scope" value="Bacteria"/>
</dbReference>
<dbReference type="HOGENOM" id="CLU_067347_0_0_6"/>
<dbReference type="InParanoid" id="P77766"/>
<dbReference type="OMA" id="CTWGGAT"/>
<dbReference type="OrthoDB" id="9804333at2"/>
<dbReference type="PhylomeDB" id="P77766"/>
<dbReference type="BioCyc" id="EcoCyc:G6634-MONOMER"/>
<dbReference type="BioCyc" id="MetaCyc:G6634-MONOMER"/>
<dbReference type="PRO" id="PR:P77766"/>
<dbReference type="Proteomes" id="UP000000625">
    <property type="component" value="Chromosome"/>
</dbReference>
<dbReference type="GO" id="GO:0097657">
    <property type="term" value="F:3',5'-nucleotide bisphosphate phosphatase activity"/>
    <property type="evidence" value="ECO:0007669"/>
    <property type="project" value="UniProtKB-EC"/>
</dbReference>
<dbReference type="GO" id="GO:0035312">
    <property type="term" value="F:5'-3' DNA exonuclease activity"/>
    <property type="evidence" value="ECO:0000314"/>
    <property type="project" value="EcoCyc"/>
</dbReference>
<dbReference type="GO" id="GO:0004534">
    <property type="term" value="F:5'-3' RNA exonuclease activity"/>
    <property type="evidence" value="ECO:0000314"/>
    <property type="project" value="UniProtKB"/>
</dbReference>
<dbReference type="GO" id="GO:0030145">
    <property type="term" value="F:manganese ion binding"/>
    <property type="evidence" value="ECO:0000314"/>
    <property type="project" value="UniProtKB"/>
</dbReference>
<dbReference type="GO" id="GO:0008252">
    <property type="term" value="F:nucleotidase activity"/>
    <property type="evidence" value="ECO:0000314"/>
    <property type="project" value="UniProtKB"/>
</dbReference>
<dbReference type="GO" id="GO:0000166">
    <property type="term" value="F:nucleotide binding"/>
    <property type="evidence" value="ECO:0007669"/>
    <property type="project" value="UniProtKB-KW"/>
</dbReference>
<dbReference type="GO" id="GO:0000481">
    <property type="term" value="P:maturation of 5S rRNA"/>
    <property type="evidence" value="ECO:0000314"/>
    <property type="project" value="EcoCyc"/>
</dbReference>
<dbReference type="GO" id="GO:0000470">
    <property type="term" value="P:maturation of LSU-rRNA"/>
    <property type="evidence" value="ECO:0000314"/>
    <property type="project" value="EcoCyc"/>
</dbReference>
<dbReference type="GO" id="GO:0030490">
    <property type="term" value="P:maturation of SSU-rRNA"/>
    <property type="evidence" value="ECO:0000314"/>
    <property type="project" value="EcoCyc"/>
</dbReference>
<dbReference type="CDD" id="cd07438">
    <property type="entry name" value="PHP_HisPPase_AMP"/>
    <property type="match status" value="1"/>
</dbReference>
<dbReference type="FunFam" id="1.10.150.650:FF:000001">
    <property type="entry name" value="PHP domain protein"/>
    <property type="match status" value="1"/>
</dbReference>
<dbReference type="Gene3D" id="1.10.150.650">
    <property type="match status" value="1"/>
</dbReference>
<dbReference type="Gene3D" id="3.20.20.140">
    <property type="entry name" value="Metal-dependent hydrolases"/>
    <property type="match status" value="1"/>
</dbReference>
<dbReference type="InterPro" id="IPR004013">
    <property type="entry name" value="PHP_dom"/>
</dbReference>
<dbReference type="InterPro" id="IPR052018">
    <property type="entry name" value="PHP_domain"/>
</dbReference>
<dbReference type="InterPro" id="IPR003141">
    <property type="entry name" value="Pol/His_phosphatase_N"/>
</dbReference>
<dbReference type="InterPro" id="IPR016195">
    <property type="entry name" value="Pol/histidinol_Pase-like"/>
</dbReference>
<dbReference type="NCBIfam" id="NF047791">
    <property type="entry name" value="RNaseRnm"/>
    <property type="match status" value="1"/>
</dbReference>
<dbReference type="PANTHER" id="PTHR42924">
    <property type="entry name" value="EXONUCLEASE"/>
    <property type="match status" value="1"/>
</dbReference>
<dbReference type="PANTHER" id="PTHR42924:SF3">
    <property type="entry name" value="POLYMERASE_HISTIDINOL PHOSPHATASE N-TERMINAL DOMAIN-CONTAINING PROTEIN"/>
    <property type="match status" value="1"/>
</dbReference>
<dbReference type="Pfam" id="PF02811">
    <property type="entry name" value="PHP"/>
    <property type="match status" value="1"/>
</dbReference>
<dbReference type="SMART" id="SM00481">
    <property type="entry name" value="POLIIIAc"/>
    <property type="match status" value="1"/>
</dbReference>
<dbReference type="SUPFAM" id="SSF89550">
    <property type="entry name" value="PHP domain-like"/>
    <property type="match status" value="1"/>
</dbReference>
<gene>
    <name evidence="7" type="primary">rnm</name>
    <name evidence="1" type="synonym">trpH</name>
    <name type="synonym">yciV</name>
    <name evidence="9" type="ordered locus">b1266</name>
    <name evidence="10" type="ordered locus">JW1258</name>
</gene>
<reference key="1">
    <citation type="journal article" date="1996" name="DNA Res.">
        <title>A 570-kb DNA sequence of the Escherichia coli K-12 genome corresponding to the 28.0-40.1 min region on the linkage map.</title>
        <authorList>
            <person name="Aiba H."/>
            <person name="Baba T."/>
            <person name="Fujita K."/>
            <person name="Hayashi K."/>
            <person name="Inada T."/>
            <person name="Isono K."/>
            <person name="Itoh T."/>
            <person name="Kasai H."/>
            <person name="Kashimoto K."/>
            <person name="Kimura S."/>
            <person name="Kitakawa M."/>
            <person name="Kitagawa M."/>
            <person name="Makino K."/>
            <person name="Miki T."/>
            <person name="Mizobuchi K."/>
            <person name="Mori H."/>
            <person name="Mori T."/>
            <person name="Motomura K."/>
            <person name="Nakade S."/>
            <person name="Nakamura Y."/>
            <person name="Nashimoto H."/>
            <person name="Nishio Y."/>
            <person name="Oshima T."/>
            <person name="Saito N."/>
            <person name="Sampei G."/>
            <person name="Seki Y."/>
            <person name="Sivasundaram S."/>
            <person name="Tagami H."/>
            <person name="Takeda J."/>
            <person name="Takemoto K."/>
            <person name="Takeuchi Y."/>
            <person name="Wada C."/>
            <person name="Yamamoto Y."/>
            <person name="Horiuchi T."/>
        </authorList>
    </citation>
    <scope>NUCLEOTIDE SEQUENCE [LARGE SCALE GENOMIC DNA]</scope>
    <source>
        <strain>K12 / W3110 / ATCC 27325 / DSM 5911</strain>
    </source>
</reference>
<reference key="2">
    <citation type="journal article" date="1997" name="Science">
        <title>The complete genome sequence of Escherichia coli K-12.</title>
        <authorList>
            <person name="Blattner F.R."/>
            <person name="Plunkett G. III"/>
            <person name="Bloch C.A."/>
            <person name="Perna N.T."/>
            <person name="Burland V."/>
            <person name="Riley M."/>
            <person name="Collado-Vides J."/>
            <person name="Glasner J.D."/>
            <person name="Rode C.K."/>
            <person name="Mayhew G.F."/>
            <person name="Gregor J."/>
            <person name="Davis N.W."/>
            <person name="Kirkpatrick H.A."/>
            <person name="Goeden M.A."/>
            <person name="Rose D.J."/>
            <person name="Mau B."/>
            <person name="Shao Y."/>
        </authorList>
    </citation>
    <scope>NUCLEOTIDE SEQUENCE [LARGE SCALE GENOMIC DNA]</scope>
    <source>
        <strain>K12 / MG1655 / ATCC 47076</strain>
    </source>
</reference>
<reference key="3">
    <citation type="journal article" date="2006" name="Mol. Syst. Biol.">
        <title>Highly accurate genome sequences of Escherichia coli K-12 strains MG1655 and W3110.</title>
        <authorList>
            <person name="Hayashi K."/>
            <person name="Morooka N."/>
            <person name="Yamamoto Y."/>
            <person name="Fujita K."/>
            <person name="Isono K."/>
            <person name="Choi S."/>
            <person name="Ohtsubo E."/>
            <person name="Baba T."/>
            <person name="Wanner B.L."/>
            <person name="Mori H."/>
            <person name="Horiuchi T."/>
        </authorList>
    </citation>
    <scope>NUCLEOTIDE SEQUENCE [LARGE SCALE GENOMIC DNA]</scope>
    <source>
        <strain>K12 / W3110 / ATCC 27325 / DSM 5911</strain>
    </source>
</reference>
<reference key="4">
    <citation type="journal article" date="2015" name="Biochemistry">
        <title>Discovery of a previously unrecognized ribonuclease from Escherichia coli that hydrolyzes 5'-phosphorylated fragments of RNA.</title>
        <authorList>
            <person name="Ghodge S.V."/>
            <person name="Raushel F.M."/>
        </authorList>
    </citation>
    <scope>FUNCTION</scope>
    <scope>CATALYTIC ACTIVITY</scope>
    <scope>SUBSTRATE SPECIFICITY</scope>
    <scope>COFACTOR</scope>
    <scope>BIOPHYSICOCHEMICAL PROPERTIES</scope>
    <source>
        <strain>K12</strain>
    </source>
</reference>
<reference key="5">
    <citation type="journal article" date="2020" name="Nucleic Acids Res.">
        <title>RNase AM, a 5' to 3' exonuclease, matures the 5' end of all three ribosomal RNAs in E. coli.</title>
        <authorList>
            <person name="Jain C."/>
        </authorList>
    </citation>
    <scope>FUNCTION IN RRNA PROCESSING</scope>
    <scope>CATALYTIC ACTIVITY</scope>
    <scope>SUBSTRATE SPECIFICITY</scope>
    <scope>DISRUPTION PHENOTYPE</scope>
    <source>
        <strain>K12 / MG1655 / ATCC 47076</strain>
    </source>
</reference>
<protein>
    <recommendedName>
        <fullName evidence="7">5'-3' exoribonuclease Rnm</fullName>
        <ecNumber evidence="3 4">3.1.13.-</ecNumber>
    </recommendedName>
    <alternativeName>
        <fullName evidence="8">3',5'-nucleotide bisphosphate phosphatase</fullName>
        <ecNumber evidence="3">3.1.3.97</ecNumber>
    </alternativeName>
    <alternativeName>
        <fullName evidence="5">RNase AM</fullName>
    </alternativeName>
</protein>
<evidence type="ECO:0000250" key="1">
    <source>
        <dbReference type="UniProtKB" id="O54453"/>
    </source>
</evidence>
<evidence type="ECO:0000250" key="2">
    <source>
        <dbReference type="UniProtKB" id="Q7NXD4"/>
    </source>
</evidence>
<evidence type="ECO:0000269" key="3">
    <source>
    </source>
</evidence>
<evidence type="ECO:0000269" key="4">
    <source>
    </source>
</evidence>
<evidence type="ECO:0000303" key="5">
    <source>
    </source>
</evidence>
<evidence type="ECO:0000303" key="6">
    <source>
    </source>
</evidence>
<evidence type="ECO:0000305" key="7"/>
<evidence type="ECO:0000305" key="8">
    <source>
    </source>
</evidence>
<evidence type="ECO:0000312" key="9">
    <source>
        <dbReference type="EMBL" id="AAC74348.1"/>
    </source>
</evidence>
<evidence type="ECO:0000312" key="10">
    <source>
        <dbReference type="EMBL" id="BAA14800.1"/>
    </source>
</evidence>
<evidence type="ECO:0007829" key="11">
    <source>
        <dbReference type="PDB" id="7UG9"/>
    </source>
</evidence>
<feature type="chain" id="PRO_0000065638" description="5'-3' exoribonuclease Rnm">
    <location>
        <begin position="1"/>
        <end position="293"/>
    </location>
</feature>
<feature type="binding site" evidence="2">
    <location>
        <position position="13"/>
    </location>
    <ligand>
        <name>Mn(2+)</name>
        <dbReference type="ChEBI" id="CHEBI:29035"/>
        <label>1</label>
    </ligand>
</feature>
<feature type="binding site" evidence="2">
    <location>
        <position position="15"/>
    </location>
    <ligand>
        <name>Mn(2+)</name>
        <dbReference type="ChEBI" id="CHEBI:29035"/>
        <label>1</label>
    </ligand>
</feature>
<feature type="binding site" evidence="2">
    <location>
        <position position="20"/>
    </location>
    <ligand>
        <name>Mn(2+)</name>
        <dbReference type="ChEBI" id="CHEBI:29035"/>
        <label>2</label>
    </ligand>
</feature>
<feature type="binding site" evidence="2">
    <location>
        <position position="45"/>
    </location>
    <ligand>
        <name>Mn(2+)</name>
        <dbReference type="ChEBI" id="CHEBI:29035"/>
        <label>2</label>
    </ligand>
</feature>
<feature type="binding site" evidence="2">
    <location>
        <position position="72"/>
    </location>
    <ligand>
        <name>Mn(2+)</name>
        <dbReference type="ChEBI" id="CHEBI:29035"/>
        <label>1</label>
    </ligand>
</feature>
<feature type="binding site" evidence="2">
    <location>
        <position position="72"/>
    </location>
    <ligand>
        <name>Mn(2+)</name>
        <dbReference type="ChEBI" id="CHEBI:29035"/>
        <label>3</label>
    </ligand>
</feature>
<feature type="binding site" evidence="2">
    <location>
        <position position="83"/>
    </location>
    <ligand>
        <name>Mn(2+)</name>
        <dbReference type="ChEBI" id="CHEBI:29035"/>
        <label>3</label>
    </ligand>
</feature>
<feature type="binding site" evidence="2">
    <location>
        <position position="198"/>
    </location>
    <ligand>
        <name>Mn(2+)</name>
        <dbReference type="ChEBI" id="CHEBI:29035"/>
        <label>3</label>
    </ligand>
</feature>
<feature type="binding site" evidence="2">
    <location>
        <position position="255"/>
    </location>
    <ligand>
        <name>Mn(2+)</name>
        <dbReference type="ChEBI" id="CHEBI:29035"/>
        <label>1</label>
    </ligand>
</feature>
<feature type="binding site" evidence="2">
    <location>
        <position position="257"/>
    </location>
    <ligand>
        <name>Mn(2+)</name>
        <dbReference type="ChEBI" id="CHEBI:29035"/>
        <label>2</label>
    </ligand>
</feature>
<feature type="turn" evidence="11">
    <location>
        <begin position="17"/>
        <end position="20"/>
    </location>
</feature>
<feature type="helix" evidence="11">
    <location>
        <begin position="25"/>
        <end position="34"/>
    </location>
</feature>
<feature type="strand" evidence="11">
    <location>
        <begin position="38"/>
        <end position="42"/>
    </location>
</feature>
<feature type="helix" evidence="11">
    <location>
        <begin position="51"/>
        <end position="60"/>
    </location>
</feature>
<feature type="strand" evidence="11">
    <location>
        <begin position="66"/>
        <end position="77"/>
    </location>
</feature>
<feature type="strand" evidence="11">
    <location>
        <begin position="80"/>
        <end position="88"/>
    </location>
</feature>
<feature type="helix" evidence="11">
    <location>
        <begin position="94"/>
        <end position="105"/>
    </location>
</feature>
<feature type="helix" evidence="11">
    <location>
        <begin position="180"/>
        <end position="189"/>
    </location>
</feature>
<feature type="strand" evidence="11">
    <location>
        <begin position="193"/>
        <end position="196"/>
    </location>
</feature>
<feature type="helix" evidence="11">
    <location>
        <begin position="199"/>
        <end position="202"/>
    </location>
</feature>
<feature type="helix" evidence="11">
    <location>
        <begin position="206"/>
        <end position="218"/>
    </location>
</feature>
<feature type="strand" evidence="11">
    <location>
        <begin position="223"/>
        <end position="227"/>
    </location>
</feature>
<feature type="helix" evidence="11">
    <location>
        <begin position="233"/>
        <end position="245"/>
    </location>
</feature>
<feature type="strand" evidence="11">
    <location>
        <begin position="249"/>
        <end position="252"/>
    </location>
</feature>
<feature type="turn" evidence="11">
    <location>
        <begin position="265"/>
        <end position="268"/>
    </location>
</feature>
<feature type="helix" evidence="11">
    <location>
        <begin position="280"/>
        <end position="283"/>
    </location>
</feature>
<proteinExistence type="evidence at protein level"/>
<organism>
    <name type="scientific">Escherichia coli (strain K12)</name>
    <dbReference type="NCBI Taxonomy" id="83333"/>
    <lineage>
        <taxon>Bacteria</taxon>
        <taxon>Pseudomonadati</taxon>
        <taxon>Pseudomonadota</taxon>
        <taxon>Gammaproteobacteria</taxon>
        <taxon>Enterobacterales</taxon>
        <taxon>Enterobacteriaceae</taxon>
        <taxon>Escherichia</taxon>
    </lineage>
</organism>
<comment type="function">
    <text evidence="3 4">Exoribonuclease that catalyzes the last steps of 5S, 16S and 23S rRNA 5'-end maturation. Removes 3 nucleotides (nt) from the 5' end of 5S, 16S and 23S rRNA precursors to generate the mature 5' ends. Precursors with longer extensions are not processed (7 nt at the 5' end of pre-23S rRNA or 66 nt at the 5'-end of 16S rRNA are not processed). 5S and 23S rRNA maturation occurs more efficiently and accurately on ribosomal particles as compared to free RNA; the enzyme overdigests free RNA but generates the correct 5'-end in ribosomes from rnm deletion strains (PubMed:32343306). Efficiently catalyzes the hydrolysis of the 3'-phosphate from 3',5'-bis-phosphonucleotides as well as the successive hydrolysis of 5'-phosphomononucleotides from the 5'-end of short pieces of RNA and DNA, with no specificity toward the identity of the nucleotide base. Is more efficient at hydrolyzing RNA oligonucleotides than DNA oligonucleotides. This enzyme can also hydrolyze annealed DNA duplexes, albeit at a catalytic efficiency approximately 10-fold lower than that of the corresponding single-stranded oligonucleotides.</text>
</comment>
<comment type="catalytic activity">
    <reaction evidence="3">
        <text>a ribonucleoside 3',5'-bisphosphate + H2O = a ribonucleoside 5'-phosphate + phosphate</text>
        <dbReference type="Rhea" id="RHEA:43532"/>
        <dbReference type="ChEBI" id="CHEBI:15377"/>
        <dbReference type="ChEBI" id="CHEBI:43474"/>
        <dbReference type="ChEBI" id="CHEBI:58043"/>
        <dbReference type="ChEBI" id="CHEBI:83402"/>
        <dbReference type="EC" id="3.1.3.97"/>
    </reaction>
</comment>
<comment type="cofactor">
    <cofactor evidence="3">
        <name>Mn(2+)</name>
        <dbReference type="ChEBI" id="CHEBI:29035"/>
    </cofactor>
    <text evidence="3 7">Binds 1 Mn(2+) ion per subunit (PubMed:25871919). However, the sequence similarity to CV_1693 from C.violaceum tends to indicate a trinuclear metal center.</text>
</comment>
<comment type="biophysicochemical properties">
    <kinetics>
        <KM evidence="3">56 uM for pAp</KM>
        <KM evidence="3">53 uM for 2'-deoxy-pAp</KM>
        <KM evidence="3">86 uM for pCp (2'5'/3'5' mixture)</KM>
        <KM evidence="3">114 uM for 2'-deoxy-pCp</KM>
        <KM evidence="3">45 uM for pGp (2'5'/3'5' mixture)</KM>
        <KM evidence="3">30 uM for 2'-deoxy-pGp</KM>
        <KM evidence="3">59 uM for pUp (2'5'/3'5' mixture)</KM>
        <KM evidence="3">110 uM for 2'-deoxy-pUp</KM>
        <KM evidence="3">32 uM for 2'-deoxy-pTp</KM>
        <KM evidence="3">48 uM for 2'-deoxy-pIp</KM>
        <KM evidence="3">420 uM for 3'-AMP</KM>
        <KM evidence="3">14 uM for p(Gp)G</KM>
        <KM evidence="3">160 uM for p(Ap)A</KM>
        <KM evidence="3">55 uM for p(Ap)(2)A</KM>
        <KM evidence="3">45 uM for p(Ap)(3)A</KM>
        <KM evidence="3">59 uM for p(Ap)(4)A</KM>
        <KM evidence="3">149 uM for p(dAp)dA</KM>
        <KM evidence="3">67 uM for p(dAp)(2)dA</KM>
        <KM evidence="3">180 uM for p(dAp)(3)dA</KM>
        <KM evidence="3">280 uM for p(dAp)(4)dA</KM>
        <text evidence="3">kcat is 9.9 sec(-1) with pAp as substrate. kcat is 5.6 sec(-1) with 2'-deoxy-pAp as substrate. kcat is 6.0 sec(-1) with pCp (2'5'/3'5' mixture) as substrate. kcat is 1.9 sec(-1) with 2'-deoxy-pCp as substrate. kcat is 5.5 sec(-1) with pGp (2'5'/3'5' mixture) as substrate. kcat is 1.7 sec(-1) with 2'-deoxy-pGp as substrate. kcat is 4.7 sec(-1) with pUp as substrate. kcat is 2.1 sec(-1) with 2'-deoxy-pUp as substrate. kcat is 1.6 sec(-1) with 2'-deoxy-pTp as substrate. kcat is 3.3 sec(-1) with 2'-deoxy-pIp as substrate. kcat is 0.22 sec(-1) with 3'-AMP as substrate. kcat is 0.60 sec(-1) with p(Gp)G as substrate. kcat is 14 sec(-1) with p(Ap)A as substrate. kcat is 3.8 sec(-1) with p(Ap)(2)A as substrate. kcat is 3.6 sec(-1) with p(Ap)(3)A as substrate. kcat is 2.7 sec(-1) with p(Ap)(4)A as substrate. kcat is 2.5 sec(-1) with p(dAp)dA as substrate. kcat is 0.72 sec(-1) with p(dAp)(2)dA as substrate. kcat is 1.20 sec(-1) with p(dAp)(3)dA as substrate. kcat is 0.79 sec(-1) with p(dAp)(4)dA as substrate.</text>
    </kinetics>
</comment>
<comment type="disruption phenotype">
    <text evidence="4">None of the 3 rRNAs are correctly processed at their 5' ends, each accumulates a precursor with 3 extra nucleotides.</text>
</comment>
<comment type="miscellaneous">
    <text evidence="8">Since E.coli possesses another enzyme, CysQ, which has been demonstrated to catalyze the hydrolysis of 3',5'-pAp to 5'-AMP and phosphate during sulfur assimilation, it seems therefore unlikely that the hydrolysis of 3',5'-bis-phosphonucleotides will be the primary physiological function of YciV.</text>
</comment>
<comment type="miscellaneous">
    <text evidence="6">Was originally suggested to be involved in tryptophan metabolism, thus the gene synonym trpH.</text>
</comment>
<comment type="similarity">
    <text evidence="7">Belongs to the PHP family. TrpH/YciV subfamily.</text>
</comment>